<accession>Q49XS3</accession>
<keyword id="KW-0067">ATP-binding</keyword>
<keyword id="KW-0963">Cytoplasm</keyword>
<keyword id="KW-0418">Kinase</keyword>
<keyword id="KW-0460">Magnesium</keyword>
<keyword id="KW-0479">Metal-binding</keyword>
<keyword id="KW-0546">Nucleotide metabolism</keyword>
<keyword id="KW-0547">Nucleotide-binding</keyword>
<keyword id="KW-0597">Phosphoprotein</keyword>
<keyword id="KW-1185">Reference proteome</keyword>
<keyword id="KW-0808">Transferase</keyword>
<reference key="1">
    <citation type="journal article" date="2005" name="Proc. Natl. Acad. Sci. U.S.A.">
        <title>Whole genome sequence of Staphylococcus saprophyticus reveals the pathogenesis of uncomplicated urinary tract infection.</title>
        <authorList>
            <person name="Kuroda M."/>
            <person name="Yamashita A."/>
            <person name="Hirakawa H."/>
            <person name="Kumano M."/>
            <person name="Morikawa K."/>
            <person name="Higashide M."/>
            <person name="Maruyama A."/>
            <person name="Inose Y."/>
            <person name="Matoba K."/>
            <person name="Toh H."/>
            <person name="Kuhara S."/>
            <person name="Hattori M."/>
            <person name="Ohta T."/>
        </authorList>
    </citation>
    <scope>NUCLEOTIDE SEQUENCE [LARGE SCALE GENOMIC DNA]</scope>
    <source>
        <strain>ATCC 15305 / DSM 20229 / NCIMB 8711 / NCTC 7292 / S-41</strain>
    </source>
</reference>
<organism>
    <name type="scientific">Staphylococcus saprophyticus subsp. saprophyticus (strain ATCC 15305 / DSM 20229 / NCIMB 8711 / NCTC 7292 / S-41)</name>
    <dbReference type="NCBI Taxonomy" id="342451"/>
    <lineage>
        <taxon>Bacteria</taxon>
        <taxon>Bacillati</taxon>
        <taxon>Bacillota</taxon>
        <taxon>Bacilli</taxon>
        <taxon>Bacillales</taxon>
        <taxon>Staphylococcaceae</taxon>
        <taxon>Staphylococcus</taxon>
    </lineage>
</organism>
<protein>
    <recommendedName>
        <fullName evidence="1">Nucleoside diphosphate kinase</fullName>
        <shortName evidence="1">NDK</shortName>
        <shortName evidence="1">NDP kinase</shortName>
        <ecNumber evidence="1">2.7.4.6</ecNumber>
    </recommendedName>
    <alternativeName>
        <fullName evidence="1">Nucleoside-2-P kinase</fullName>
    </alternativeName>
</protein>
<name>NDK_STAS1</name>
<feature type="chain" id="PRO_0000226582" description="Nucleoside diphosphate kinase">
    <location>
        <begin position="1"/>
        <end position="149"/>
    </location>
</feature>
<feature type="active site" description="Pros-phosphohistidine intermediate" evidence="1">
    <location>
        <position position="115"/>
    </location>
</feature>
<feature type="binding site" evidence="1">
    <location>
        <position position="9"/>
    </location>
    <ligand>
        <name>ATP</name>
        <dbReference type="ChEBI" id="CHEBI:30616"/>
    </ligand>
</feature>
<feature type="binding site" evidence="1">
    <location>
        <position position="57"/>
    </location>
    <ligand>
        <name>ATP</name>
        <dbReference type="ChEBI" id="CHEBI:30616"/>
    </ligand>
</feature>
<feature type="binding site" evidence="1">
    <location>
        <position position="85"/>
    </location>
    <ligand>
        <name>ATP</name>
        <dbReference type="ChEBI" id="CHEBI:30616"/>
    </ligand>
</feature>
<feature type="binding site" evidence="1">
    <location>
        <position position="91"/>
    </location>
    <ligand>
        <name>ATP</name>
        <dbReference type="ChEBI" id="CHEBI:30616"/>
    </ligand>
</feature>
<feature type="binding site" evidence="1">
    <location>
        <position position="102"/>
    </location>
    <ligand>
        <name>ATP</name>
        <dbReference type="ChEBI" id="CHEBI:30616"/>
    </ligand>
</feature>
<feature type="binding site" evidence="1">
    <location>
        <position position="112"/>
    </location>
    <ligand>
        <name>ATP</name>
        <dbReference type="ChEBI" id="CHEBI:30616"/>
    </ligand>
</feature>
<comment type="function">
    <text evidence="1">Major role in the synthesis of nucleoside triphosphates other than ATP. The ATP gamma phosphate is transferred to the NDP beta phosphate via a ping-pong mechanism, using a phosphorylated active-site intermediate.</text>
</comment>
<comment type="catalytic activity">
    <reaction evidence="1">
        <text>a 2'-deoxyribonucleoside 5'-diphosphate + ATP = a 2'-deoxyribonucleoside 5'-triphosphate + ADP</text>
        <dbReference type="Rhea" id="RHEA:44640"/>
        <dbReference type="ChEBI" id="CHEBI:30616"/>
        <dbReference type="ChEBI" id="CHEBI:61560"/>
        <dbReference type="ChEBI" id="CHEBI:73316"/>
        <dbReference type="ChEBI" id="CHEBI:456216"/>
        <dbReference type="EC" id="2.7.4.6"/>
    </reaction>
</comment>
<comment type="catalytic activity">
    <reaction evidence="1">
        <text>a ribonucleoside 5'-diphosphate + ATP = a ribonucleoside 5'-triphosphate + ADP</text>
        <dbReference type="Rhea" id="RHEA:18113"/>
        <dbReference type="ChEBI" id="CHEBI:30616"/>
        <dbReference type="ChEBI" id="CHEBI:57930"/>
        <dbReference type="ChEBI" id="CHEBI:61557"/>
        <dbReference type="ChEBI" id="CHEBI:456216"/>
        <dbReference type="EC" id="2.7.4.6"/>
    </reaction>
</comment>
<comment type="cofactor">
    <cofactor evidence="1">
        <name>Mg(2+)</name>
        <dbReference type="ChEBI" id="CHEBI:18420"/>
    </cofactor>
</comment>
<comment type="subunit">
    <text evidence="1">Homotetramer.</text>
</comment>
<comment type="subcellular location">
    <subcellularLocation>
        <location evidence="1">Cytoplasm</location>
    </subcellularLocation>
</comment>
<comment type="similarity">
    <text evidence="1">Belongs to the NDK family.</text>
</comment>
<sequence length="149" mass="16742">MERTFLMIKPDAVQRNLIGEIISRIERKGLKLVGGKFMTVPQSLAEEHYAEHTDKPFYKHLISFITSAPVFAMVVEGEDAVHVARHIIGKTNPSEATPGTIRGDLGLTVGRNIIHGSDSVESANKEINLWFKADELSEYSESRESWLYE</sequence>
<dbReference type="EC" id="2.7.4.6" evidence="1"/>
<dbReference type="EMBL" id="AP008934">
    <property type="protein sequence ID" value="BAE18422.1"/>
    <property type="molecule type" value="Genomic_DNA"/>
</dbReference>
<dbReference type="RefSeq" id="WP_002483252.1">
    <property type="nucleotide sequence ID" value="NZ_MTGA01000038.1"/>
</dbReference>
<dbReference type="SMR" id="Q49XS3"/>
<dbReference type="GeneID" id="66867507"/>
<dbReference type="KEGG" id="ssp:SSP1277"/>
<dbReference type="eggNOG" id="COG0105">
    <property type="taxonomic scope" value="Bacteria"/>
</dbReference>
<dbReference type="HOGENOM" id="CLU_060216_6_3_9"/>
<dbReference type="OrthoDB" id="9801161at2"/>
<dbReference type="Proteomes" id="UP000006371">
    <property type="component" value="Chromosome"/>
</dbReference>
<dbReference type="GO" id="GO:0005737">
    <property type="term" value="C:cytoplasm"/>
    <property type="evidence" value="ECO:0007669"/>
    <property type="project" value="UniProtKB-SubCell"/>
</dbReference>
<dbReference type="GO" id="GO:0005524">
    <property type="term" value="F:ATP binding"/>
    <property type="evidence" value="ECO:0007669"/>
    <property type="project" value="UniProtKB-UniRule"/>
</dbReference>
<dbReference type="GO" id="GO:0046872">
    <property type="term" value="F:metal ion binding"/>
    <property type="evidence" value="ECO:0007669"/>
    <property type="project" value="UniProtKB-KW"/>
</dbReference>
<dbReference type="GO" id="GO:0004550">
    <property type="term" value="F:nucleoside diphosphate kinase activity"/>
    <property type="evidence" value="ECO:0007669"/>
    <property type="project" value="UniProtKB-UniRule"/>
</dbReference>
<dbReference type="GO" id="GO:0006241">
    <property type="term" value="P:CTP biosynthetic process"/>
    <property type="evidence" value="ECO:0007669"/>
    <property type="project" value="UniProtKB-UniRule"/>
</dbReference>
<dbReference type="GO" id="GO:0006183">
    <property type="term" value="P:GTP biosynthetic process"/>
    <property type="evidence" value="ECO:0007669"/>
    <property type="project" value="UniProtKB-UniRule"/>
</dbReference>
<dbReference type="GO" id="GO:0006228">
    <property type="term" value="P:UTP biosynthetic process"/>
    <property type="evidence" value="ECO:0007669"/>
    <property type="project" value="UniProtKB-UniRule"/>
</dbReference>
<dbReference type="CDD" id="cd04413">
    <property type="entry name" value="NDPk_I"/>
    <property type="match status" value="1"/>
</dbReference>
<dbReference type="FunFam" id="3.30.70.141:FF:000002">
    <property type="entry name" value="Nucleoside diphosphate kinase"/>
    <property type="match status" value="1"/>
</dbReference>
<dbReference type="Gene3D" id="3.30.70.141">
    <property type="entry name" value="Nucleoside diphosphate kinase-like domain"/>
    <property type="match status" value="1"/>
</dbReference>
<dbReference type="HAMAP" id="MF_00451">
    <property type="entry name" value="NDP_kinase"/>
    <property type="match status" value="1"/>
</dbReference>
<dbReference type="InterPro" id="IPR034907">
    <property type="entry name" value="NDK-like_dom"/>
</dbReference>
<dbReference type="InterPro" id="IPR036850">
    <property type="entry name" value="NDK-like_dom_sf"/>
</dbReference>
<dbReference type="InterPro" id="IPR001564">
    <property type="entry name" value="Nucleoside_diP_kinase"/>
</dbReference>
<dbReference type="InterPro" id="IPR023005">
    <property type="entry name" value="Nucleoside_diP_kinase_AS"/>
</dbReference>
<dbReference type="NCBIfam" id="NF001908">
    <property type="entry name" value="PRK00668.1"/>
    <property type="match status" value="1"/>
</dbReference>
<dbReference type="PANTHER" id="PTHR11349">
    <property type="entry name" value="NUCLEOSIDE DIPHOSPHATE KINASE"/>
    <property type="match status" value="1"/>
</dbReference>
<dbReference type="Pfam" id="PF00334">
    <property type="entry name" value="NDK"/>
    <property type="match status" value="1"/>
</dbReference>
<dbReference type="PRINTS" id="PR01243">
    <property type="entry name" value="NUCDPKINASE"/>
</dbReference>
<dbReference type="SMART" id="SM00562">
    <property type="entry name" value="NDK"/>
    <property type="match status" value="1"/>
</dbReference>
<dbReference type="SUPFAM" id="SSF54919">
    <property type="entry name" value="Nucleoside diphosphate kinase, NDK"/>
    <property type="match status" value="1"/>
</dbReference>
<dbReference type="PROSITE" id="PS00469">
    <property type="entry name" value="NDPK"/>
    <property type="match status" value="1"/>
</dbReference>
<dbReference type="PROSITE" id="PS51374">
    <property type="entry name" value="NDPK_LIKE"/>
    <property type="match status" value="1"/>
</dbReference>
<proteinExistence type="inferred from homology"/>
<evidence type="ECO:0000255" key="1">
    <source>
        <dbReference type="HAMAP-Rule" id="MF_00451"/>
    </source>
</evidence>
<gene>
    <name evidence="1" type="primary">ndk</name>
    <name type="ordered locus">SSP1277</name>
</gene>